<keyword id="KW-0167">Capsid protein</keyword>
<keyword id="KW-1152">Outer capsid protein</keyword>
<keyword id="KW-0946">Virion</keyword>
<evidence type="ECO:0000305" key="1"/>
<sequence>MPEPHAVLYVTNELSHIVKNGFLPIWKLTGDESLNDLWLENGKYATDVYAYGDVSKWTIRQLRGHGFIFISTHKNVQLADIIKTVDVRIPREVARSHDMKAFENEIGRRRIRMRKGFGDALRNYAFKMAIEFHGSEAETLNDANPRLHKVYGMPEIPPLYMEYAEIGARFDDEPTDEKLVSMLDYIVYSAEEVHYVGCGDLRTLMQFKKRSPGRFRRVLWHVYDPIAPECSDPNVIVHNIMVDSKKDILKYMNFLKRVERLFIWDVSSDRSQMNDHEWETTRFAEDRLGEEIAYEMGGAFSSALIKHRIPNSKDEYHCISTYLFPQPGADADMYELRNFMRLRGYSHVDRHMHPDASVTKVVSRDVRKMVELYHGRDRGTFLKKRLFEHLHIVRKNGLLHESDEPRADLFYLTNRCNMGLEPSIYEVMKKSVIATAWVGRAPLYDYDDFALPRSTVMLNGSYRDISILDGNGAILYLMWRYPDIVKKDLTYDPAWAMNFAVSLKEPIPDPPVPDISLCRFIGLRVESSVLRVRNPTLHETADELKRMGLDLSGHLYVTLMSGAYVTDLFWWFNIILDWSAQNKEQKLRDLKRSAAEVIEWKEQMAERPWHVRNDLIRALREYKRKMGMREGASIDSWLELLRHL</sequence>
<gene>
    <name type="primary">Segment-4</name>
</gene>
<dbReference type="EMBL" id="L08640">
    <property type="protein sequence ID" value="AAA42827.1"/>
    <property type="molecule type" value="mRNA"/>
</dbReference>
<dbReference type="SMR" id="P33429"/>
<dbReference type="GO" id="GO:0039624">
    <property type="term" value="C:viral outer capsid"/>
    <property type="evidence" value="ECO:0007669"/>
    <property type="project" value="UniProtKB-KW"/>
</dbReference>
<dbReference type="CDD" id="cd20758">
    <property type="entry name" value="capping_2-OMTase_Orbivirus"/>
    <property type="match status" value="1"/>
</dbReference>
<dbReference type="Gene3D" id="1.20.1280.200">
    <property type="entry name" value="Orbivirus VP4 core protein, C-terminal domain"/>
    <property type="match status" value="1"/>
</dbReference>
<dbReference type="Gene3D" id="3.40.50.150">
    <property type="entry name" value="Vaccinia Virus protein VP39"/>
    <property type="match status" value="1"/>
</dbReference>
<dbReference type="InterPro" id="IPR007753">
    <property type="entry name" value="Orbi_VP4"/>
</dbReference>
<dbReference type="InterPro" id="IPR043026">
    <property type="entry name" value="Orbi_VP4_C"/>
</dbReference>
<dbReference type="InterPro" id="IPR029063">
    <property type="entry name" value="SAM-dependent_MTases_sf"/>
</dbReference>
<dbReference type="Pfam" id="PF05059">
    <property type="entry name" value="Orbi_VP4"/>
    <property type="match status" value="1"/>
</dbReference>
<feature type="chain" id="PRO_0000222707" description="Core protein VP4">
    <location>
        <begin position="1"/>
        <end position="644"/>
    </location>
</feature>
<organism>
    <name type="scientific">Bluetongue virus 13 (isolate USA)</name>
    <name type="common">BTV 13</name>
    <dbReference type="NCBI Taxonomy" id="33717"/>
    <lineage>
        <taxon>Viruses</taxon>
        <taxon>Riboviria</taxon>
        <taxon>Orthornavirae</taxon>
        <taxon>Duplornaviricota</taxon>
        <taxon>Resentoviricetes</taxon>
        <taxon>Reovirales</taxon>
        <taxon>Sedoreoviridae</taxon>
        <taxon>Orbivirus</taxon>
        <taxon>Bluetongue virus</taxon>
    </lineage>
</organism>
<accession>P33429</accession>
<comment type="function">
    <text>The VP4 protein is one of the five proteins (with VP1, VP3, VP6 and VP7) which form the inner capsid of the virus.</text>
</comment>
<comment type="subcellular location">
    <subcellularLocation>
        <location evidence="1">Virion</location>
    </subcellularLocation>
</comment>
<comment type="similarity">
    <text evidence="1">Belongs to the orbivirus VP4 family.</text>
</comment>
<organismHost>
    <name type="scientific">Antilocapra americana</name>
    <name type="common">Pronghorn</name>
    <dbReference type="NCBI Taxonomy" id="9891"/>
</organismHost>
<organismHost>
    <name type="scientific">Bos taurus</name>
    <name type="common">Bovine</name>
    <dbReference type="NCBI Taxonomy" id="9913"/>
</organismHost>
<organismHost>
    <name type="scientific">Capra hircus</name>
    <name type="common">Goat</name>
    <dbReference type="NCBI Taxonomy" id="9925"/>
</organismHost>
<organismHost>
    <name type="scientific">Culicoides variipennis</name>
    <name type="common">Biting midge</name>
    <dbReference type="NCBI Taxonomy" id="46212"/>
</organismHost>
<organismHost>
    <name type="scientific">Ovis aries</name>
    <name type="common">Sheep</name>
    <dbReference type="NCBI Taxonomy" id="9940"/>
</organismHost>
<reference key="1">
    <citation type="journal article" date="1993" name="Virology">
        <title>Conservation of the segment 4 gene sequence and of a leucine zipper motif in VP4 among five US bluetongue viruses.</title>
        <authorList>
            <person name="Huang I.J."/>
            <person name="Hayama E."/>
            <person name="Jeong Y.J."/>
            <person name="Li J.K.-K."/>
        </authorList>
    </citation>
    <scope>NUCLEOTIDE SEQUENCE [MRNA]</scope>
</reference>
<proteinExistence type="evidence at transcript level"/>
<protein>
    <recommendedName>
        <fullName>Core protein VP4</fullName>
    </recommendedName>
</protein>
<name>VP4_BTV13</name>